<protein>
    <recommendedName>
        <fullName evidence="5">O-acyltransferase ausQ</fullName>
        <ecNumber evidence="3">2.3.1.-</ecNumber>
    </recommendedName>
    <alternativeName>
        <fullName evidence="5">Austinoid biosynthesis cluster protein Q</fullName>
    </alternativeName>
</protein>
<sequence>MPSSSDFEAFTLTPLDQANGQVFFFYSLSYRVQDEASALHTIHKAIDLLLEKAPFLNGEIVFATDGLEVRPPTTDSEDRVPLVQVKRHSNRTLPVEKLGQSPFNVPRNFPLDALFNPLAALPTPDRPTPVIRFQVNLVNDGLVLTIGFNHAVFDALGAAVIVKLLAESCRNPANVGREGSLEIASTQSRVRSPLLALTSRWKKLDRVRADAPSSPEVTAVPPPLTDECFVFCADKLQRLRAACNSILCQLNENQKLLAGQPDVRFLSTNDVLTALICETIAQARHAARHTCRDEGLHPESTVSECLMAVNIRKFVDPPLPDDYMGNAGIPLRFQIETRRDAEPDLPRAFQEANPGLNTSSFLAIAETAYTIRIKLASFGDSYIDSLRSFLNADESQTAVHVLPACAIVSSLRHIKTYELQFGAELGEIRTFETGIPWVNGSCVILPLCANSSEVAGSAPWNVRITLDEGTMYCFKNEPALRWALWEQGRSKVPGSCDCKADA</sequence>
<accession>A0A0U5GJY1</accession>
<feature type="chain" id="PRO_0000453868" description="O-acyltransferase ausQ">
    <location>
        <begin position="1"/>
        <end position="502"/>
    </location>
</feature>
<gene>
    <name evidence="5" type="primary">ausQ</name>
    <name type="ORF">ASPCAL14359</name>
</gene>
<name>AUSQ_ASPCI</name>
<keyword id="KW-0012">Acyltransferase</keyword>
<keyword id="KW-1185">Reference proteome</keyword>
<keyword id="KW-0808">Transferase</keyword>
<dbReference type="EC" id="2.3.1.-" evidence="3"/>
<dbReference type="EMBL" id="CDMC01000024">
    <property type="protein sequence ID" value="CEL11256.1"/>
    <property type="molecule type" value="Genomic_DNA"/>
</dbReference>
<dbReference type="SMR" id="A0A0U5GJY1"/>
<dbReference type="STRING" id="454130.A0A0U5GJY1"/>
<dbReference type="OMA" id="ILPRMYF"/>
<dbReference type="OrthoDB" id="1862401at2759"/>
<dbReference type="UniPathway" id="UPA00213"/>
<dbReference type="Proteomes" id="UP000054771">
    <property type="component" value="Unassembled WGS sequence"/>
</dbReference>
<dbReference type="GO" id="GO:0016746">
    <property type="term" value="F:acyltransferase activity"/>
    <property type="evidence" value="ECO:0007669"/>
    <property type="project" value="UniProtKB-KW"/>
</dbReference>
<dbReference type="GO" id="GO:0016114">
    <property type="term" value="P:terpenoid biosynthetic process"/>
    <property type="evidence" value="ECO:0007669"/>
    <property type="project" value="UniProtKB-UniPathway"/>
</dbReference>
<dbReference type="Gene3D" id="3.30.559.10">
    <property type="entry name" value="Chloramphenicol acetyltransferase-like domain"/>
    <property type="match status" value="2"/>
</dbReference>
<dbReference type="InterPro" id="IPR023213">
    <property type="entry name" value="CAT-like_dom_sf"/>
</dbReference>
<dbReference type="InterPro" id="IPR051283">
    <property type="entry name" value="Sec_Metabolite_Acyltrans"/>
</dbReference>
<dbReference type="PANTHER" id="PTHR31896">
    <property type="entry name" value="FAMILY REGULATORY PROTEIN, PUTATIVE (AFU_ORTHOLOGUE AFUA_3G14730)-RELATED"/>
    <property type="match status" value="1"/>
</dbReference>
<dbReference type="PANTHER" id="PTHR31896:SF64">
    <property type="entry name" value="TRICHOTHECENE 3-O-ACETYLTRANSFERASE"/>
    <property type="match status" value="1"/>
</dbReference>
<dbReference type="Pfam" id="PF02458">
    <property type="entry name" value="Transferase"/>
    <property type="match status" value="1"/>
</dbReference>
<proteinExistence type="evidence at protein level"/>
<evidence type="ECO:0000250" key="1">
    <source>
        <dbReference type="UniProtKB" id="A0A1U8QLK0"/>
    </source>
</evidence>
<evidence type="ECO:0000250" key="2">
    <source>
        <dbReference type="UniProtKB" id="Q4WZ64"/>
    </source>
</evidence>
<evidence type="ECO:0000269" key="3">
    <source>
    </source>
</evidence>
<evidence type="ECO:0000269" key="4">
    <source>
    </source>
</evidence>
<evidence type="ECO:0000303" key="5">
    <source>
    </source>
</evidence>
<evidence type="ECO:0000305" key="6"/>
<evidence type="ECO:0000305" key="7">
    <source>
    </source>
</evidence>
<comment type="function">
    <text evidence="1 3 4">O-acyltransferase; part of the gene cluster that mediates the biosynthesis of calidodehydroaustin, a fungal meroterpenoid (PubMed:28233494, PubMed:29076725). The first step of the pathway is the synthesis of 3,5-dimethylorsellinic acid by the polyketide synthase ausA (PubMed:28233494). 3,5-dimethylorsellinic acid is then prenylated by the polyprenyl transferase ausN (PubMed:28233494). Further epoxidation by the FAD-dependent monooxygenase ausM and cyclization by the probable terpene cyclase ausL lead to the formation of protoaustinoid A (By similarity). Protoaustinoid A is then oxidized to spiro-lactone preaustinoid A3 by the combined action of the FAD-binding monooxygenases ausB and ausC, and the dioxygenase ausE (By similarity). Acid-catalyzed keto-rearrangement and ring contraction of the tetraketide portion of preaustinoid A3 by ausJ lead to the formation of preaustinoid A4 (By similarity). The aldo-keto reductase ausK, with the help of ausH, is involved in the next step by transforming preaustinoid A4 into isoaustinone which is in turn hydroxylated by the P450 monooxygenase ausI to form austinolide (By similarity). The cytochrome P450 monooxygenase ausG modifies austinolide to austinol (By similarity). Austinol is further acetylated to austin by the O-acetyltransferase ausP, which spontaneously changes to dehydroaustin (PubMed:28233494). The cytochrome P450 monooxygenase ausR then converts dehydroaustin is into 7-dehydrodehydroaustin (PubMed:28233494). The hydroxylation catalyzed by ausR permits the O-acetyltransferase ausQ to add an additional acetyl group to the molecule, leading to the formation of acetoxydehydroaustin (PubMed:28233494). The short chain dehydrogenase ausT catalyzes the reduction of the double bond present between carbon atoms 1 and 2 to convert 7-dehydrodehydroaustin into 1,2-dihydro-7-hydroxydehydroaustin (PubMed:28233494). AusQ catalyzes not only an acetylation reaction but also the addition of the PKS ausV diketide product to 1,2-dihydro-7-hydroxydehydroaustin, forming precalidodehydroaustin (PubMed:28233494). Finally, the iron/alpha-ketoglutarate-dependent dioxygenase converts precalidodehydroaustin into calidodehydroaustin (PubMed:28233494).</text>
</comment>
<comment type="pathway">
    <text evidence="3">Secondary metabolite biosynthesis; terpenoid biosynthesis.</text>
</comment>
<comment type="subunit">
    <text evidence="2">Monomer.</text>
</comment>
<comment type="miscellaneous">
    <text evidence="7">In A.calidoustus, the austinoid gene cluster lies on a contiguous DNA region, while clusters from E.nidulans and P.brasilianum are split in their respective genomes. Genetic rearrangements provoked variability among the clusters and E.nidulans produces the least number of austionoid derivatives with the end products austinol and dehydroaustinol, while P.brasilianum can produce until acetoxydehydroaustin, and A.calidoustus produces the highest number of identified derivatives.</text>
</comment>
<comment type="similarity">
    <text evidence="6">Belongs to the fumigaclavine B O-acetyltransferase family.</text>
</comment>
<organism>
    <name type="scientific">Aspergillus calidoustus</name>
    <dbReference type="NCBI Taxonomy" id="454130"/>
    <lineage>
        <taxon>Eukaryota</taxon>
        <taxon>Fungi</taxon>
        <taxon>Dikarya</taxon>
        <taxon>Ascomycota</taxon>
        <taxon>Pezizomycotina</taxon>
        <taxon>Eurotiomycetes</taxon>
        <taxon>Eurotiomycetidae</taxon>
        <taxon>Eurotiales</taxon>
        <taxon>Aspergillaceae</taxon>
        <taxon>Aspergillus</taxon>
        <taxon>Aspergillus subgen. Nidulantes</taxon>
    </lineage>
</organism>
<reference key="1">
    <citation type="journal article" date="2016" name="Genome Announc.">
        <title>Draft genome sequences of fungus Aspergillus calidoustus.</title>
        <authorList>
            <person name="Horn F."/>
            <person name="Linde J."/>
            <person name="Mattern D.J."/>
            <person name="Walther G."/>
            <person name="Guthke R."/>
            <person name="Scherlach K."/>
            <person name="Martin K."/>
            <person name="Brakhage A.A."/>
            <person name="Petzke L."/>
            <person name="Valiante V."/>
        </authorList>
    </citation>
    <scope>NUCLEOTIDE SEQUENCE [LARGE SCALE GENOMIC DNA]</scope>
    <source>
        <strain>SF006504</strain>
    </source>
</reference>
<reference key="2">
    <citation type="journal article" date="2017" name="ACS Chem. Biol.">
        <title>Discovery of an Extended Austinoid Biosynthetic Pathway in Aspergillus calidoustus.</title>
        <authorList>
            <person name="Valiante V."/>
            <person name="Mattern D.J."/>
            <person name="Schueffler A."/>
            <person name="Horn F."/>
            <person name="Walther G."/>
            <person name="Scherlach K."/>
            <person name="Petzke L."/>
            <person name="Dickhaut J."/>
            <person name="Guthke R."/>
            <person name="Hertweck C."/>
            <person name="Nett M."/>
            <person name="Thines E."/>
            <person name="Brakhage A.A."/>
        </authorList>
    </citation>
    <scope>FUNCTION</scope>
    <scope>CATALYTIC ACTIVITY</scope>
    <scope>PATHWAY</scope>
</reference>
<reference key="3">
    <citation type="journal article" date="2017" name="ACS Chem. Biol.">
        <title>Rewiring of the austinoid biosynthetic pathway in filamentous fungi.</title>
        <authorList>
            <person name="Mattern D.J."/>
            <person name="Valiante V."/>
            <person name="Horn F."/>
            <person name="Petzke L."/>
            <person name="Brakhage A.A."/>
        </authorList>
    </citation>
    <scope>FUNCTION</scope>
</reference>